<organism>
    <name type="scientific">Phaeosphaeria nodorum (strain SN15 / ATCC MYA-4574 / FGSC 10173)</name>
    <name type="common">Glume blotch fungus</name>
    <name type="synonym">Parastagonospora nodorum</name>
    <dbReference type="NCBI Taxonomy" id="321614"/>
    <lineage>
        <taxon>Eukaryota</taxon>
        <taxon>Fungi</taxon>
        <taxon>Dikarya</taxon>
        <taxon>Ascomycota</taxon>
        <taxon>Pezizomycotina</taxon>
        <taxon>Dothideomycetes</taxon>
        <taxon>Pleosporomycetidae</taxon>
        <taxon>Pleosporales</taxon>
        <taxon>Pleosporineae</taxon>
        <taxon>Phaeosphaeriaceae</taxon>
        <taxon>Parastagonospora</taxon>
    </lineage>
</organism>
<evidence type="ECO:0000250" key="1"/>
<evidence type="ECO:0000255" key="2"/>
<evidence type="ECO:0000256" key="3">
    <source>
        <dbReference type="SAM" id="MobiDB-lite"/>
    </source>
</evidence>
<evidence type="ECO:0000305" key="4"/>
<dbReference type="EMBL" id="CH445330">
    <property type="protein sequence ID" value="EAT88043.1"/>
    <property type="status" value="ALT_SEQ"/>
    <property type="molecule type" value="Genomic_DNA"/>
</dbReference>
<dbReference type="RefSeq" id="XP_001794701.1">
    <property type="nucleotide sequence ID" value="XM_001794649.1"/>
</dbReference>
<dbReference type="SMR" id="Q0UVD1"/>
<dbReference type="STRING" id="321614.Q0UVD1"/>
<dbReference type="GeneID" id="5971569"/>
<dbReference type="KEGG" id="pno:SNOG_04283"/>
<dbReference type="VEuPathDB" id="FungiDB:JI435_042830"/>
<dbReference type="InParanoid" id="Q0UVD1"/>
<dbReference type="OrthoDB" id="3942380at2759"/>
<dbReference type="Proteomes" id="UP000001055">
    <property type="component" value="Unassembled WGS sequence"/>
</dbReference>
<dbReference type="GO" id="GO:0005730">
    <property type="term" value="C:nucleolus"/>
    <property type="evidence" value="ECO:0007669"/>
    <property type="project" value="UniProtKB-SubCell"/>
</dbReference>
<dbReference type="GO" id="GO:0006364">
    <property type="term" value="P:rRNA processing"/>
    <property type="evidence" value="ECO:0007669"/>
    <property type="project" value="UniProtKB-KW"/>
</dbReference>
<dbReference type="InterPro" id="IPR005579">
    <property type="entry name" value="Cgr1-like"/>
</dbReference>
<dbReference type="Pfam" id="PF03879">
    <property type="entry name" value="Cgr1"/>
    <property type="match status" value="1"/>
</dbReference>
<comment type="function">
    <text evidence="1">Involved in nucleolar integrity and required for processing of the pre-rRNA for the 60S ribosome subunit.</text>
</comment>
<comment type="subcellular location">
    <subcellularLocation>
        <location evidence="1">Nucleus</location>
        <location evidence="1">Nucleolus</location>
    </subcellularLocation>
</comment>
<comment type="similarity">
    <text evidence="4">Belongs to the CGR1 family.</text>
</comment>
<comment type="sequence caution" evidence="4">
    <conflict type="erroneous gene model prediction">
        <sequence resource="EMBL-CDS" id="EAT88043"/>
    </conflict>
</comment>
<accession>Q0UVD1</accession>
<proteinExistence type="inferred from homology"/>
<feature type="chain" id="PRO_0000278959" description="rRNA-processing protein CGR1">
    <location>
        <begin position="1"/>
        <end position="119"/>
    </location>
</feature>
<feature type="region of interest" description="Disordered" evidence="3">
    <location>
        <begin position="21"/>
        <end position="47"/>
    </location>
</feature>
<feature type="region of interest" description="Disordered" evidence="3">
    <location>
        <begin position="82"/>
        <end position="119"/>
    </location>
</feature>
<feature type="coiled-coil region" evidence="2">
    <location>
        <begin position="47"/>
        <end position="105"/>
    </location>
</feature>
<feature type="compositionally biased region" description="Basic and acidic residues" evidence="3">
    <location>
        <begin position="82"/>
        <end position="99"/>
    </location>
</feature>
<feature type="compositionally biased region" description="Basic residues" evidence="3">
    <location>
        <begin position="100"/>
        <end position="119"/>
    </location>
</feature>
<sequence length="119" mass="14190">MSEAVETQPPAADTVSAVKGMKKNGKQWHDNKTAFRPRANQTSWDKRTAERKALAATKAKEKELKEEKETERQRRIDAIKTKRAAKEERERFQKMEEKMHKRRVERLKRREKRNKMLKS</sequence>
<protein>
    <recommendedName>
        <fullName>rRNA-processing protein CGR1</fullName>
    </recommendedName>
</protein>
<name>CGR1_PHANO</name>
<keyword id="KW-0175">Coiled coil</keyword>
<keyword id="KW-0539">Nucleus</keyword>
<keyword id="KW-0690">Ribosome biogenesis</keyword>
<keyword id="KW-0698">rRNA processing</keyword>
<gene>
    <name type="primary">CGR1</name>
    <name type="ORF">SNOG_04283</name>
</gene>
<reference key="1">
    <citation type="journal article" date="2007" name="Plant Cell">
        <title>Dothideomycete-plant interactions illuminated by genome sequencing and EST analysis of the wheat pathogen Stagonospora nodorum.</title>
        <authorList>
            <person name="Hane J.K."/>
            <person name="Lowe R.G.T."/>
            <person name="Solomon P.S."/>
            <person name="Tan K.-C."/>
            <person name="Schoch C.L."/>
            <person name="Spatafora J.W."/>
            <person name="Crous P.W."/>
            <person name="Kodira C.D."/>
            <person name="Birren B.W."/>
            <person name="Galagan J.E."/>
            <person name="Torriani S.F.F."/>
            <person name="McDonald B.A."/>
            <person name="Oliver R.P."/>
        </authorList>
    </citation>
    <scope>NUCLEOTIDE SEQUENCE [LARGE SCALE GENOMIC DNA]</scope>
    <source>
        <strain>SN15 / ATCC MYA-4574 / FGSC 10173</strain>
    </source>
</reference>